<protein>
    <recommendedName>
        <fullName evidence="1">Crossover junction endodeoxyribonuclease RuvC</fullName>
        <ecNumber evidence="1">3.1.21.10</ecNumber>
    </recommendedName>
    <alternativeName>
        <fullName evidence="1">Holliday junction nuclease RuvC</fullName>
    </alternativeName>
    <alternativeName>
        <fullName evidence="1">Holliday junction resolvase RuvC</fullName>
    </alternativeName>
</protein>
<evidence type="ECO:0000255" key="1">
    <source>
        <dbReference type="HAMAP-Rule" id="MF_00034"/>
    </source>
</evidence>
<name>RUVC_LAWIP</name>
<proteinExistence type="inferred from homology"/>
<sequence length="168" mass="18085">MISVIGIDPGSRNTGWGIVHEVSGVLHLVCCGVIQPSCNGSFAERLAHIFQEISSIIMKYKPVEASVEQVFTAQNPLTALKLGQARGAAVVACANQGLLIKDYEATTIKKTLVGHGRATKEQVSFMVGRSLGVKPDWPIDTSDALATAICHLTIRRFENRTARVAKTL</sequence>
<gene>
    <name evidence="1" type="primary">ruvC</name>
    <name type="ordered locus">LI0268</name>
</gene>
<organism>
    <name type="scientific">Lawsonia intracellularis (strain PHE/MN1-00)</name>
    <dbReference type="NCBI Taxonomy" id="363253"/>
    <lineage>
        <taxon>Bacteria</taxon>
        <taxon>Pseudomonadati</taxon>
        <taxon>Thermodesulfobacteriota</taxon>
        <taxon>Desulfovibrionia</taxon>
        <taxon>Desulfovibrionales</taxon>
        <taxon>Desulfovibrionaceae</taxon>
        <taxon>Lawsonia</taxon>
    </lineage>
</organism>
<comment type="function">
    <text evidence="1">The RuvA-RuvB-RuvC complex processes Holliday junction (HJ) DNA during genetic recombination and DNA repair. Endonuclease that resolves HJ intermediates. Cleaves cruciform DNA by making single-stranded nicks across the HJ at symmetrical positions within the homologous arms, yielding a 5'-phosphate and a 3'-hydroxyl group; requires a central core of homology in the junction. The consensus cleavage sequence is 5'-(A/T)TT(C/G)-3'. Cleavage occurs on the 3'-side of the TT dinucleotide at the point of strand exchange. HJ branch migration catalyzed by RuvA-RuvB allows RuvC to scan DNA until it finds its consensus sequence, where it cleaves and resolves the cruciform DNA.</text>
</comment>
<comment type="catalytic activity">
    <reaction evidence="1">
        <text>Endonucleolytic cleavage at a junction such as a reciprocal single-stranded crossover between two homologous DNA duplexes (Holliday junction).</text>
        <dbReference type="EC" id="3.1.21.10"/>
    </reaction>
</comment>
<comment type="cofactor">
    <cofactor evidence="1">
        <name>Mg(2+)</name>
        <dbReference type="ChEBI" id="CHEBI:18420"/>
    </cofactor>
    <text evidence="1">Binds 2 Mg(2+) ion per subunit.</text>
</comment>
<comment type="subunit">
    <text evidence="1">Homodimer which binds Holliday junction (HJ) DNA. The HJ becomes 2-fold symmetrical on binding to RuvC with unstacked arms; it has a different conformation from HJ DNA in complex with RuvA. In the full resolvosome a probable DNA-RuvA(4)-RuvB(12)-RuvC(2) complex forms which resolves the HJ.</text>
</comment>
<comment type="subcellular location">
    <subcellularLocation>
        <location evidence="1">Cytoplasm</location>
    </subcellularLocation>
</comment>
<comment type="similarity">
    <text evidence="1">Belongs to the RuvC family.</text>
</comment>
<accession>Q1MRQ2</accession>
<feature type="chain" id="PRO_1000002771" description="Crossover junction endodeoxyribonuclease RuvC">
    <location>
        <begin position="1"/>
        <end position="168"/>
    </location>
</feature>
<feature type="active site" evidence="1">
    <location>
        <position position="8"/>
    </location>
</feature>
<feature type="active site" evidence="1">
    <location>
        <position position="68"/>
    </location>
</feature>
<feature type="active site" evidence="1">
    <location>
        <position position="140"/>
    </location>
</feature>
<feature type="binding site" evidence="1">
    <location>
        <position position="8"/>
    </location>
    <ligand>
        <name>Mg(2+)</name>
        <dbReference type="ChEBI" id="CHEBI:18420"/>
        <label>1</label>
    </ligand>
</feature>
<feature type="binding site" evidence="1">
    <location>
        <position position="68"/>
    </location>
    <ligand>
        <name>Mg(2+)</name>
        <dbReference type="ChEBI" id="CHEBI:18420"/>
        <label>2</label>
    </ligand>
</feature>
<feature type="binding site" evidence="1">
    <location>
        <position position="140"/>
    </location>
    <ligand>
        <name>Mg(2+)</name>
        <dbReference type="ChEBI" id="CHEBI:18420"/>
        <label>1</label>
    </ligand>
</feature>
<keyword id="KW-0963">Cytoplasm</keyword>
<keyword id="KW-0227">DNA damage</keyword>
<keyword id="KW-0233">DNA recombination</keyword>
<keyword id="KW-0234">DNA repair</keyword>
<keyword id="KW-0238">DNA-binding</keyword>
<keyword id="KW-0255">Endonuclease</keyword>
<keyword id="KW-0378">Hydrolase</keyword>
<keyword id="KW-0460">Magnesium</keyword>
<keyword id="KW-0479">Metal-binding</keyword>
<keyword id="KW-0540">Nuclease</keyword>
<keyword id="KW-1185">Reference proteome</keyword>
<reference key="1">
    <citation type="submission" date="2005-11" db="EMBL/GenBank/DDBJ databases">
        <title>The complete genome sequence of Lawsonia intracellularis: the causative agent of proliferative enteropathy.</title>
        <authorList>
            <person name="Kaur K."/>
            <person name="Zhang Q."/>
            <person name="Beckler D."/>
            <person name="Munir S."/>
            <person name="Li L."/>
            <person name="Kinsley K."/>
            <person name="Herron L."/>
            <person name="Peterson A."/>
            <person name="May B."/>
            <person name="Singh S."/>
            <person name="Gebhart C."/>
            <person name="Kapur V."/>
        </authorList>
    </citation>
    <scope>NUCLEOTIDE SEQUENCE [LARGE SCALE GENOMIC DNA]</scope>
    <source>
        <strain>PHE/MN1-00</strain>
    </source>
</reference>
<dbReference type="EC" id="3.1.21.10" evidence="1"/>
<dbReference type="EMBL" id="AM180252">
    <property type="protein sequence ID" value="CAJ54324.1"/>
    <property type="molecule type" value="Genomic_DNA"/>
</dbReference>
<dbReference type="RefSeq" id="WP_011526350.1">
    <property type="nucleotide sequence ID" value="NC_008011.1"/>
</dbReference>
<dbReference type="SMR" id="Q1MRQ2"/>
<dbReference type="STRING" id="363253.LI0268"/>
<dbReference type="KEGG" id="lip:LI0268"/>
<dbReference type="eggNOG" id="COG0817">
    <property type="taxonomic scope" value="Bacteria"/>
</dbReference>
<dbReference type="HOGENOM" id="CLU_091257_3_1_7"/>
<dbReference type="OrthoDB" id="9805499at2"/>
<dbReference type="Proteomes" id="UP000002430">
    <property type="component" value="Chromosome"/>
</dbReference>
<dbReference type="GO" id="GO:0005737">
    <property type="term" value="C:cytoplasm"/>
    <property type="evidence" value="ECO:0007669"/>
    <property type="project" value="UniProtKB-SubCell"/>
</dbReference>
<dbReference type="GO" id="GO:0048476">
    <property type="term" value="C:Holliday junction resolvase complex"/>
    <property type="evidence" value="ECO:0007669"/>
    <property type="project" value="UniProtKB-UniRule"/>
</dbReference>
<dbReference type="GO" id="GO:0008821">
    <property type="term" value="F:crossover junction DNA endonuclease activity"/>
    <property type="evidence" value="ECO:0007669"/>
    <property type="project" value="UniProtKB-UniRule"/>
</dbReference>
<dbReference type="GO" id="GO:0003677">
    <property type="term" value="F:DNA binding"/>
    <property type="evidence" value="ECO:0007669"/>
    <property type="project" value="UniProtKB-KW"/>
</dbReference>
<dbReference type="GO" id="GO:0000287">
    <property type="term" value="F:magnesium ion binding"/>
    <property type="evidence" value="ECO:0007669"/>
    <property type="project" value="UniProtKB-UniRule"/>
</dbReference>
<dbReference type="GO" id="GO:0006310">
    <property type="term" value="P:DNA recombination"/>
    <property type="evidence" value="ECO:0007669"/>
    <property type="project" value="UniProtKB-UniRule"/>
</dbReference>
<dbReference type="GO" id="GO:0006281">
    <property type="term" value="P:DNA repair"/>
    <property type="evidence" value="ECO:0007669"/>
    <property type="project" value="UniProtKB-UniRule"/>
</dbReference>
<dbReference type="CDD" id="cd16962">
    <property type="entry name" value="RuvC"/>
    <property type="match status" value="1"/>
</dbReference>
<dbReference type="FunFam" id="3.30.420.10:FF:000002">
    <property type="entry name" value="Crossover junction endodeoxyribonuclease RuvC"/>
    <property type="match status" value="1"/>
</dbReference>
<dbReference type="Gene3D" id="3.30.420.10">
    <property type="entry name" value="Ribonuclease H-like superfamily/Ribonuclease H"/>
    <property type="match status" value="1"/>
</dbReference>
<dbReference type="HAMAP" id="MF_00034">
    <property type="entry name" value="RuvC"/>
    <property type="match status" value="1"/>
</dbReference>
<dbReference type="InterPro" id="IPR012337">
    <property type="entry name" value="RNaseH-like_sf"/>
</dbReference>
<dbReference type="InterPro" id="IPR036397">
    <property type="entry name" value="RNaseH_sf"/>
</dbReference>
<dbReference type="InterPro" id="IPR002176">
    <property type="entry name" value="X-over_junc_endoDNase_RuvC"/>
</dbReference>
<dbReference type="NCBIfam" id="TIGR00228">
    <property type="entry name" value="ruvC"/>
    <property type="match status" value="1"/>
</dbReference>
<dbReference type="PANTHER" id="PTHR30194">
    <property type="entry name" value="CROSSOVER JUNCTION ENDODEOXYRIBONUCLEASE RUVC"/>
    <property type="match status" value="1"/>
</dbReference>
<dbReference type="PANTHER" id="PTHR30194:SF3">
    <property type="entry name" value="CROSSOVER JUNCTION ENDODEOXYRIBONUCLEASE RUVC"/>
    <property type="match status" value="1"/>
</dbReference>
<dbReference type="Pfam" id="PF02075">
    <property type="entry name" value="RuvC"/>
    <property type="match status" value="1"/>
</dbReference>
<dbReference type="PRINTS" id="PR00696">
    <property type="entry name" value="RSOLVASERUVC"/>
</dbReference>
<dbReference type="SUPFAM" id="SSF53098">
    <property type="entry name" value="Ribonuclease H-like"/>
    <property type="match status" value="1"/>
</dbReference>